<proteinExistence type="inferred from homology"/>
<gene>
    <name evidence="1" type="primary">accD2</name>
    <name type="ordered locus">Rcas_2927</name>
</gene>
<reference key="1">
    <citation type="submission" date="2007-08" db="EMBL/GenBank/DDBJ databases">
        <title>Complete sequence of Roseiflexus castenholzii DSM 13941.</title>
        <authorList>
            <consortium name="US DOE Joint Genome Institute"/>
            <person name="Copeland A."/>
            <person name="Lucas S."/>
            <person name="Lapidus A."/>
            <person name="Barry K."/>
            <person name="Glavina del Rio T."/>
            <person name="Dalin E."/>
            <person name="Tice H."/>
            <person name="Pitluck S."/>
            <person name="Thompson L.S."/>
            <person name="Brettin T."/>
            <person name="Bruce D."/>
            <person name="Detter J.C."/>
            <person name="Han C."/>
            <person name="Tapia R."/>
            <person name="Schmutz J."/>
            <person name="Larimer F."/>
            <person name="Land M."/>
            <person name="Hauser L."/>
            <person name="Kyrpides N."/>
            <person name="Mikhailova N."/>
            <person name="Bryant D.A."/>
            <person name="Hanada S."/>
            <person name="Tsukatani Y."/>
            <person name="Richardson P."/>
        </authorList>
    </citation>
    <scope>NUCLEOTIDE SEQUENCE [LARGE SCALE GENOMIC DNA]</scope>
    <source>
        <strain>DSM 13941 / HLO8</strain>
    </source>
</reference>
<feature type="chain" id="PRO_0000389839" description="Acetyl-coenzyme A carboxylase carboxyl transferase subunit beta 2">
    <location>
        <begin position="1"/>
        <end position="300"/>
    </location>
</feature>
<feature type="domain" description="CoA carboxyltransferase N-terminal" evidence="2">
    <location>
        <begin position="26"/>
        <end position="294"/>
    </location>
</feature>
<feature type="zinc finger region" description="C4-type" evidence="1">
    <location>
        <begin position="30"/>
        <end position="51"/>
    </location>
</feature>
<feature type="binding site" evidence="1">
    <location>
        <position position="30"/>
    </location>
    <ligand>
        <name>Zn(2+)</name>
        <dbReference type="ChEBI" id="CHEBI:29105"/>
    </ligand>
</feature>
<feature type="binding site" evidence="1">
    <location>
        <position position="33"/>
    </location>
    <ligand>
        <name>Zn(2+)</name>
        <dbReference type="ChEBI" id="CHEBI:29105"/>
    </ligand>
</feature>
<feature type="binding site" evidence="1">
    <location>
        <position position="49"/>
    </location>
    <ligand>
        <name>Zn(2+)</name>
        <dbReference type="ChEBI" id="CHEBI:29105"/>
    </ligand>
</feature>
<feature type="binding site" evidence="1">
    <location>
        <position position="51"/>
    </location>
    <ligand>
        <name>Zn(2+)</name>
        <dbReference type="ChEBI" id="CHEBI:29105"/>
    </ligand>
</feature>
<comment type="function">
    <text evidence="1">Component of the acetyl coenzyme A carboxylase (ACC) complex. Biotin carboxylase (BC) catalyzes the carboxylation of biotin on its carrier protein (BCCP) and then the CO(2) group is transferred by the transcarboxylase to acetyl-CoA to form malonyl-CoA.</text>
</comment>
<comment type="catalytic activity">
    <reaction evidence="1">
        <text>N(6)-carboxybiotinyl-L-lysyl-[protein] + acetyl-CoA = N(6)-biotinyl-L-lysyl-[protein] + malonyl-CoA</text>
        <dbReference type="Rhea" id="RHEA:54728"/>
        <dbReference type="Rhea" id="RHEA-COMP:10505"/>
        <dbReference type="Rhea" id="RHEA-COMP:10506"/>
        <dbReference type="ChEBI" id="CHEBI:57288"/>
        <dbReference type="ChEBI" id="CHEBI:57384"/>
        <dbReference type="ChEBI" id="CHEBI:83144"/>
        <dbReference type="ChEBI" id="CHEBI:83145"/>
        <dbReference type="EC" id="2.1.3.15"/>
    </reaction>
</comment>
<comment type="cofactor">
    <cofactor evidence="1">
        <name>Zn(2+)</name>
        <dbReference type="ChEBI" id="CHEBI:29105"/>
    </cofactor>
    <text evidence="1">Binds 1 zinc ion per subunit.</text>
</comment>
<comment type="pathway">
    <text evidence="1">Lipid metabolism; malonyl-CoA biosynthesis; malonyl-CoA from acetyl-CoA: step 1/1.</text>
</comment>
<comment type="subunit">
    <text evidence="1">Acetyl-CoA carboxylase is a heterohexamer composed of biotin carboxyl carrier protein (AccB), biotin carboxylase (AccC) and two subunits each of ACCase subunit alpha (AccA) and ACCase subunit beta (AccD).</text>
</comment>
<comment type="subcellular location">
    <subcellularLocation>
        <location evidence="1">Cytoplasm</location>
    </subcellularLocation>
</comment>
<comment type="similarity">
    <text evidence="1">Belongs to the AccD/PCCB family.</text>
</comment>
<comment type="sequence caution" evidence="3">
    <conflict type="erroneous initiation">
        <sequence resource="EMBL-CDS" id="ABU58989"/>
    </conflict>
    <text>Extended N-terminus.</text>
</comment>
<name>ACCD2_ROSCS</name>
<protein>
    <recommendedName>
        <fullName evidence="1">Acetyl-coenzyme A carboxylase carboxyl transferase subunit beta 2</fullName>
        <shortName evidence="1">ACCase subunit beta 2</shortName>
        <shortName evidence="1">Acetyl-CoA carboxylase carboxyltransferase subunit beta 2</shortName>
        <ecNumber evidence="1">2.1.3.15</ecNumber>
    </recommendedName>
</protein>
<keyword id="KW-0067">ATP-binding</keyword>
<keyword id="KW-0963">Cytoplasm</keyword>
<keyword id="KW-0275">Fatty acid biosynthesis</keyword>
<keyword id="KW-0276">Fatty acid metabolism</keyword>
<keyword id="KW-0444">Lipid biosynthesis</keyword>
<keyword id="KW-0443">Lipid metabolism</keyword>
<keyword id="KW-0479">Metal-binding</keyword>
<keyword id="KW-0547">Nucleotide-binding</keyword>
<keyword id="KW-1185">Reference proteome</keyword>
<keyword id="KW-0808">Transferase</keyword>
<keyword id="KW-0862">Zinc</keyword>
<keyword id="KW-0863">Zinc-finger</keyword>
<sequence length="300" mass="32725">MKELIQRSRKSFTVVHPIESDVPDNVWVKCPSCRELIYHKQLAERMKVCRCGYHMRLTAREWLALLDEGSFVEYDAHLRPTDPLGFVSPKEAYADKLRETQRRTGLADVVVSGVGSIEGYRLSIAVCDFNFIGGSMGSVFGEKMARAAERAATLGIPLLTINTSGGARMQEGVIALMQLAKVNMALTRLAAARQPHIAVLVDPCYGGVTASYASVADIIIAEPGANIGFAGRRVIEQTIRQKLPADFQTAEFMLQHGMVDMVTPRSELHGVLAKLLRLYAAEGRSGAYSSEAVAPTLASI</sequence>
<dbReference type="EC" id="2.1.3.15" evidence="1"/>
<dbReference type="EMBL" id="CP000804">
    <property type="protein sequence ID" value="ABU58989.1"/>
    <property type="status" value="ALT_INIT"/>
    <property type="molecule type" value="Genomic_DNA"/>
</dbReference>
<dbReference type="RefSeq" id="WP_041330882.1">
    <property type="nucleotide sequence ID" value="NC_009767.1"/>
</dbReference>
<dbReference type="SMR" id="A7NN57"/>
<dbReference type="STRING" id="383372.Rcas_2927"/>
<dbReference type="KEGG" id="rca:Rcas_2927"/>
<dbReference type="eggNOG" id="COG0777">
    <property type="taxonomic scope" value="Bacteria"/>
</dbReference>
<dbReference type="HOGENOM" id="CLU_015486_1_0_0"/>
<dbReference type="OrthoDB" id="9772975at2"/>
<dbReference type="UniPathway" id="UPA00655">
    <property type="reaction ID" value="UER00711"/>
</dbReference>
<dbReference type="Proteomes" id="UP000000263">
    <property type="component" value="Chromosome"/>
</dbReference>
<dbReference type="GO" id="GO:0009317">
    <property type="term" value="C:acetyl-CoA carboxylase complex"/>
    <property type="evidence" value="ECO:0007669"/>
    <property type="project" value="InterPro"/>
</dbReference>
<dbReference type="GO" id="GO:0003989">
    <property type="term" value="F:acetyl-CoA carboxylase activity"/>
    <property type="evidence" value="ECO:0007669"/>
    <property type="project" value="InterPro"/>
</dbReference>
<dbReference type="GO" id="GO:0005524">
    <property type="term" value="F:ATP binding"/>
    <property type="evidence" value="ECO:0007669"/>
    <property type="project" value="UniProtKB-KW"/>
</dbReference>
<dbReference type="GO" id="GO:0016743">
    <property type="term" value="F:carboxyl- or carbamoyltransferase activity"/>
    <property type="evidence" value="ECO:0007669"/>
    <property type="project" value="UniProtKB-UniRule"/>
</dbReference>
<dbReference type="GO" id="GO:0008270">
    <property type="term" value="F:zinc ion binding"/>
    <property type="evidence" value="ECO:0007669"/>
    <property type="project" value="UniProtKB-UniRule"/>
</dbReference>
<dbReference type="GO" id="GO:0006633">
    <property type="term" value="P:fatty acid biosynthetic process"/>
    <property type="evidence" value="ECO:0007669"/>
    <property type="project" value="UniProtKB-KW"/>
</dbReference>
<dbReference type="GO" id="GO:2001295">
    <property type="term" value="P:malonyl-CoA biosynthetic process"/>
    <property type="evidence" value="ECO:0007669"/>
    <property type="project" value="UniProtKB-UniRule"/>
</dbReference>
<dbReference type="Gene3D" id="3.90.226.10">
    <property type="entry name" value="2-enoyl-CoA Hydratase, Chain A, domain 1"/>
    <property type="match status" value="1"/>
</dbReference>
<dbReference type="HAMAP" id="MF_01395">
    <property type="entry name" value="AcetylCoA_CT_beta"/>
    <property type="match status" value="1"/>
</dbReference>
<dbReference type="InterPro" id="IPR034733">
    <property type="entry name" value="AcCoA_carboxyl_beta"/>
</dbReference>
<dbReference type="InterPro" id="IPR000438">
    <property type="entry name" value="Acetyl_CoA_COase_Trfase_b_su"/>
</dbReference>
<dbReference type="InterPro" id="IPR029045">
    <property type="entry name" value="ClpP/crotonase-like_dom_sf"/>
</dbReference>
<dbReference type="InterPro" id="IPR011762">
    <property type="entry name" value="COA_CT_N"/>
</dbReference>
<dbReference type="InterPro" id="IPR041010">
    <property type="entry name" value="Znf-ACC"/>
</dbReference>
<dbReference type="NCBIfam" id="TIGR00515">
    <property type="entry name" value="accD"/>
    <property type="match status" value="1"/>
</dbReference>
<dbReference type="PANTHER" id="PTHR42995">
    <property type="entry name" value="ACETYL-COENZYME A CARBOXYLASE CARBOXYL TRANSFERASE SUBUNIT BETA, CHLOROPLASTIC"/>
    <property type="match status" value="1"/>
</dbReference>
<dbReference type="PANTHER" id="PTHR42995:SF5">
    <property type="entry name" value="ACETYL-COENZYME A CARBOXYLASE CARBOXYL TRANSFERASE SUBUNIT BETA, CHLOROPLASTIC"/>
    <property type="match status" value="1"/>
</dbReference>
<dbReference type="Pfam" id="PF01039">
    <property type="entry name" value="Carboxyl_trans"/>
    <property type="match status" value="1"/>
</dbReference>
<dbReference type="Pfam" id="PF17848">
    <property type="entry name" value="Zn_ribbon_ACC"/>
    <property type="match status" value="1"/>
</dbReference>
<dbReference type="PRINTS" id="PR01070">
    <property type="entry name" value="ACCCTRFRASEB"/>
</dbReference>
<dbReference type="SUPFAM" id="SSF52096">
    <property type="entry name" value="ClpP/crotonase"/>
    <property type="match status" value="1"/>
</dbReference>
<dbReference type="PROSITE" id="PS50980">
    <property type="entry name" value="COA_CT_NTER"/>
    <property type="match status" value="1"/>
</dbReference>
<organism>
    <name type="scientific">Roseiflexus castenholzii (strain DSM 13941 / HLO8)</name>
    <dbReference type="NCBI Taxonomy" id="383372"/>
    <lineage>
        <taxon>Bacteria</taxon>
        <taxon>Bacillati</taxon>
        <taxon>Chloroflexota</taxon>
        <taxon>Chloroflexia</taxon>
        <taxon>Chloroflexales</taxon>
        <taxon>Roseiflexineae</taxon>
        <taxon>Roseiflexaceae</taxon>
        <taxon>Roseiflexus</taxon>
    </lineage>
</organism>
<evidence type="ECO:0000255" key="1">
    <source>
        <dbReference type="HAMAP-Rule" id="MF_01395"/>
    </source>
</evidence>
<evidence type="ECO:0000255" key="2">
    <source>
        <dbReference type="PROSITE-ProRule" id="PRU01136"/>
    </source>
</evidence>
<evidence type="ECO:0000305" key="3"/>
<accession>A7NN57</accession>